<sequence>MTASCRIRRNSNSAQKSTMGWSALSTSDSKVFYRVAWLLGRGKMAEIDAILITDVNGIGTTADDQLAFVSLIADQGETTTVAFGPEIGSRIAASFMAACGQLQHQIATRTGKEERKFKPFAAAGFSVRAGLAADGSNSGMLSISTVAGAEVHFIATERSLRELENQLTLLLEQLRLRSRPN</sequence>
<proteinExistence type="predicted"/>
<reference key="1">
    <citation type="journal article" date="1997" name="Nature">
        <title>Molecular basis of symbiosis between Rhizobium and legumes.</title>
        <authorList>
            <person name="Freiberg C.A."/>
            <person name="Fellay R."/>
            <person name="Bairoch A."/>
            <person name="Broughton W.J."/>
            <person name="Rosenthal A."/>
            <person name="Perret X."/>
        </authorList>
    </citation>
    <scope>NUCLEOTIDE SEQUENCE [LARGE SCALE GENOMIC DNA]</scope>
    <source>
        <strain>NBRC 101917 / NGR234</strain>
    </source>
</reference>
<reference key="2">
    <citation type="journal article" date="2009" name="Appl. Environ. Microbiol.">
        <title>Rhizobium sp. strain NGR234 possesses a remarkable number of secretion systems.</title>
        <authorList>
            <person name="Schmeisser C."/>
            <person name="Liesegang H."/>
            <person name="Krysciak D."/>
            <person name="Bakkou N."/>
            <person name="Le Quere A."/>
            <person name="Wollherr A."/>
            <person name="Heinemeyer I."/>
            <person name="Morgenstern B."/>
            <person name="Pommerening-Roeser A."/>
            <person name="Flores M."/>
            <person name="Palacios R."/>
            <person name="Brenner S."/>
            <person name="Gottschalk G."/>
            <person name="Schmitz R.A."/>
            <person name="Broughton W.J."/>
            <person name="Perret X."/>
            <person name="Strittmatter A.W."/>
            <person name="Streit W.R."/>
        </authorList>
    </citation>
    <scope>NUCLEOTIDE SEQUENCE [LARGE SCALE GENOMIC DNA]</scope>
    <source>
        <strain>NBRC 101917 / NGR234</strain>
    </source>
</reference>
<organism>
    <name type="scientific">Sinorhizobium fredii (strain NBRC 101917 / NGR234)</name>
    <dbReference type="NCBI Taxonomy" id="394"/>
    <lineage>
        <taxon>Bacteria</taxon>
        <taxon>Pseudomonadati</taxon>
        <taxon>Pseudomonadota</taxon>
        <taxon>Alphaproteobacteria</taxon>
        <taxon>Hyphomicrobiales</taxon>
        <taxon>Rhizobiaceae</taxon>
        <taxon>Sinorhizobium/Ensifer group</taxon>
        <taxon>Sinorhizobium</taxon>
    </lineage>
</organism>
<name>Y4WG_SINFN</name>
<gene>
    <name type="ordered locus">NGR_a00980</name>
    <name type="ORF">y4wG</name>
</gene>
<keyword id="KW-0614">Plasmid</keyword>
<keyword id="KW-1185">Reference proteome</keyword>
<protein>
    <recommendedName>
        <fullName>Uncharacterized protein y4wG</fullName>
    </recommendedName>
</protein>
<geneLocation type="plasmid">
    <name>sym pNGR234a</name>
</geneLocation>
<dbReference type="EMBL" id="U00090">
    <property type="protein sequence ID" value="AAB91914.1"/>
    <property type="molecule type" value="Genomic_DNA"/>
</dbReference>
<dbReference type="RefSeq" id="NP_444127.1">
    <property type="nucleotide sequence ID" value="NC_000914.2"/>
</dbReference>
<dbReference type="KEGG" id="rhi:NGR_a00980"/>
<dbReference type="HOGENOM" id="CLU_1487922_0_0_5"/>
<dbReference type="OrthoDB" id="8282351at2"/>
<dbReference type="Proteomes" id="UP000001054">
    <property type="component" value="Plasmid pNGR234a"/>
</dbReference>
<accession>P55685</accession>
<feature type="chain" id="PRO_0000200956" description="Uncharacterized protein y4wG">
    <location>
        <begin position="1"/>
        <end position="181"/>
    </location>
</feature>